<organism>
    <name type="scientific">Stenotrophomonas maltophilia (strain K279a)</name>
    <dbReference type="NCBI Taxonomy" id="522373"/>
    <lineage>
        <taxon>Bacteria</taxon>
        <taxon>Pseudomonadati</taxon>
        <taxon>Pseudomonadota</taxon>
        <taxon>Gammaproteobacteria</taxon>
        <taxon>Lysobacterales</taxon>
        <taxon>Lysobacteraceae</taxon>
        <taxon>Stenotrophomonas</taxon>
        <taxon>Stenotrophomonas maltophilia group</taxon>
    </lineage>
</organism>
<keyword id="KW-1185">Reference proteome</keyword>
<feature type="chain" id="PRO_1000130928" description="Elongation factor P-like protein">
    <location>
        <begin position="1"/>
        <end position="188"/>
    </location>
</feature>
<name>EFPL_STRMK</name>
<comment type="similarity">
    <text evidence="1">Belongs to the elongation factor P family.</text>
</comment>
<reference key="1">
    <citation type="journal article" date="2008" name="Genome Biol.">
        <title>The complete genome, comparative and functional analysis of Stenotrophomonas maltophilia reveals an organism heavily shielded by drug resistance determinants.</title>
        <authorList>
            <person name="Crossman L.C."/>
            <person name="Gould V.C."/>
            <person name="Dow J.M."/>
            <person name="Vernikos G.S."/>
            <person name="Okazaki A."/>
            <person name="Sebaihia M."/>
            <person name="Saunders D."/>
            <person name="Arrowsmith C."/>
            <person name="Carver T."/>
            <person name="Peters N."/>
            <person name="Adlem E."/>
            <person name="Kerhornou A."/>
            <person name="Lord A."/>
            <person name="Murphy L."/>
            <person name="Seeger K."/>
            <person name="Squares R."/>
            <person name="Rutter S."/>
            <person name="Quail M.A."/>
            <person name="Rajandream M.A."/>
            <person name="Harris D."/>
            <person name="Churcher C."/>
            <person name="Bentley S.D."/>
            <person name="Parkhill J."/>
            <person name="Thomson N.R."/>
            <person name="Avison M.B."/>
        </authorList>
    </citation>
    <scope>NUCLEOTIDE SEQUENCE [LARGE SCALE GENOMIC DNA]</scope>
    <source>
        <strain>K279a</strain>
    </source>
</reference>
<protein>
    <recommendedName>
        <fullName evidence="1">Elongation factor P-like protein</fullName>
    </recommendedName>
</protein>
<gene>
    <name type="ordered locus">Smlt2205</name>
</gene>
<evidence type="ECO:0000255" key="1">
    <source>
        <dbReference type="HAMAP-Rule" id="MF_00646"/>
    </source>
</evidence>
<accession>B2FQ58</accession>
<dbReference type="EMBL" id="AM743169">
    <property type="protein sequence ID" value="CAQ45703.1"/>
    <property type="molecule type" value="Genomic_DNA"/>
</dbReference>
<dbReference type="SMR" id="B2FQ58"/>
<dbReference type="EnsemblBacteria" id="CAQ45703">
    <property type="protein sequence ID" value="CAQ45703"/>
    <property type="gene ID" value="Smlt2205"/>
</dbReference>
<dbReference type="KEGG" id="sml:Smlt2205"/>
<dbReference type="eggNOG" id="COG0231">
    <property type="taxonomic scope" value="Bacteria"/>
</dbReference>
<dbReference type="HOGENOM" id="CLU_074944_2_0_6"/>
<dbReference type="Proteomes" id="UP000008840">
    <property type="component" value="Chromosome"/>
</dbReference>
<dbReference type="GO" id="GO:0005737">
    <property type="term" value="C:cytoplasm"/>
    <property type="evidence" value="ECO:0007669"/>
    <property type="project" value="InterPro"/>
</dbReference>
<dbReference type="GO" id="GO:0003746">
    <property type="term" value="F:translation elongation factor activity"/>
    <property type="evidence" value="ECO:0007669"/>
    <property type="project" value="UniProtKB-UniRule"/>
</dbReference>
<dbReference type="GO" id="GO:0043043">
    <property type="term" value="P:peptide biosynthetic process"/>
    <property type="evidence" value="ECO:0007669"/>
    <property type="project" value="InterPro"/>
</dbReference>
<dbReference type="CDD" id="cd04470">
    <property type="entry name" value="S1_EF-P_repeat_1"/>
    <property type="match status" value="1"/>
</dbReference>
<dbReference type="CDD" id="cd05794">
    <property type="entry name" value="S1_EF-P_repeat_2"/>
    <property type="match status" value="1"/>
</dbReference>
<dbReference type="FunFam" id="2.40.50.140:FF:000004">
    <property type="entry name" value="Elongation factor P"/>
    <property type="match status" value="1"/>
</dbReference>
<dbReference type="FunFam" id="2.30.30.30:FF:000036">
    <property type="entry name" value="Elongation factor P-like protein"/>
    <property type="match status" value="1"/>
</dbReference>
<dbReference type="FunFam" id="2.40.50.140:FF:000233">
    <property type="entry name" value="Elongation factor P-like protein"/>
    <property type="match status" value="1"/>
</dbReference>
<dbReference type="Gene3D" id="2.30.30.30">
    <property type="match status" value="1"/>
</dbReference>
<dbReference type="Gene3D" id="2.40.50.140">
    <property type="entry name" value="Nucleic acid-binding proteins"/>
    <property type="match status" value="2"/>
</dbReference>
<dbReference type="HAMAP" id="MF_00646">
    <property type="entry name" value="EFP"/>
    <property type="match status" value="1"/>
</dbReference>
<dbReference type="InterPro" id="IPR015365">
    <property type="entry name" value="Elong-fact-P_C"/>
</dbReference>
<dbReference type="InterPro" id="IPR012340">
    <property type="entry name" value="NA-bd_OB-fold"/>
</dbReference>
<dbReference type="InterPro" id="IPR014722">
    <property type="entry name" value="Rib_uL2_dom2"/>
</dbReference>
<dbReference type="InterPro" id="IPR020599">
    <property type="entry name" value="Transl_elong_fac_P/YeiP"/>
</dbReference>
<dbReference type="InterPro" id="IPR013185">
    <property type="entry name" value="Transl_elong_KOW-like"/>
</dbReference>
<dbReference type="InterPro" id="IPR011897">
    <property type="entry name" value="Transl_elong_p-like_YeiP"/>
</dbReference>
<dbReference type="InterPro" id="IPR001059">
    <property type="entry name" value="Transl_elong_P/YeiP_cen"/>
</dbReference>
<dbReference type="InterPro" id="IPR013852">
    <property type="entry name" value="Transl_elong_P/YeiP_CS"/>
</dbReference>
<dbReference type="InterPro" id="IPR008991">
    <property type="entry name" value="Translation_prot_SH3-like_sf"/>
</dbReference>
<dbReference type="NCBIfam" id="NF001810">
    <property type="entry name" value="PRK00529.1"/>
    <property type="match status" value="1"/>
</dbReference>
<dbReference type="NCBIfam" id="NF003392">
    <property type="entry name" value="PRK04542.1"/>
    <property type="match status" value="1"/>
</dbReference>
<dbReference type="NCBIfam" id="TIGR02178">
    <property type="entry name" value="yeiP"/>
    <property type="match status" value="1"/>
</dbReference>
<dbReference type="PANTHER" id="PTHR30053">
    <property type="entry name" value="ELONGATION FACTOR P"/>
    <property type="match status" value="1"/>
</dbReference>
<dbReference type="PANTHER" id="PTHR30053:SF14">
    <property type="entry name" value="TRANSLATION ELONGATION FACTOR KOW-LIKE DOMAIN-CONTAINING PROTEIN"/>
    <property type="match status" value="1"/>
</dbReference>
<dbReference type="Pfam" id="PF01132">
    <property type="entry name" value="EFP"/>
    <property type="match status" value="1"/>
</dbReference>
<dbReference type="Pfam" id="PF08207">
    <property type="entry name" value="EFP_N"/>
    <property type="match status" value="1"/>
</dbReference>
<dbReference type="Pfam" id="PF09285">
    <property type="entry name" value="Elong-fact-P_C"/>
    <property type="match status" value="1"/>
</dbReference>
<dbReference type="PIRSF" id="PIRSF005901">
    <property type="entry name" value="EF-P"/>
    <property type="match status" value="1"/>
</dbReference>
<dbReference type="SMART" id="SM01185">
    <property type="entry name" value="EFP"/>
    <property type="match status" value="1"/>
</dbReference>
<dbReference type="SMART" id="SM00841">
    <property type="entry name" value="Elong-fact-P_C"/>
    <property type="match status" value="1"/>
</dbReference>
<dbReference type="SUPFAM" id="SSF50249">
    <property type="entry name" value="Nucleic acid-binding proteins"/>
    <property type="match status" value="2"/>
</dbReference>
<dbReference type="SUPFAM" id="SSF50104">
    <property type="entry name" value="Translation proteins SH3-like domain"/>
    <property type="match status" value="1"/>
</dbReference>
<dbReference type="PROSITE" id="PS01275">
    <property type="entry name" value="EFP"/>
    <property type="match status" value="1"/>
</dbReference>
<proteinExistence type="inferred from homology"/>
<sequence>MKANDIKKGNVVEYNNGVYQIRDIERSSPQGRGGNVRFRFIMYSVPGGNKLDASFDADDNLVEVELLRRQSTYSYKDGDAFVFLDDEDYTPYTLDADVIGDDAGYITDGLTGIYVQVIDEQPVAIQLPASVVLEVIETPPELKGGTATKRPKPAKLNTGIEIMVPEYIVNGERVLVNTATGEFAGRAD</sequence>